<evidence type="ECO:0000250" key="1">
    <source>
        <dbReference type="UniProtKB" id="P9WKZ1"/>
    </source>
</evidence>
<evidence type="ECO:0000250" key="2">
    <source>
        <dbReference type="UniProtKB" id="Q9WWU5"/>
    </source>
</evidence>
<evidence type="ECO:0000305" key="3"/>
<dbReference type="EC" id="1.14.11.77" evidence="1"/>
<dbReference type="EMBL" id="LT708304">
    <property type="protein sequence ID" value="SIU02068.1"/>
    <property type="molecule type" value="Genomic_DNA"/>
</dbReference>
<dbReference type="RefSeq" id="NP_857080.1">
    <property type="nucleotide sequence ID" value="NC_002945.3"/>
</dbReference>
<dbReference type="RefSeq" id="WP_003900050.1">
    <property type="nucleotide sequence ID" value="NC_002945.4"/>
</dbReference>
<dbReference type="SMR" id="P65076"/>
<dbReference type="KEGG" id="mbo:BQ2027_MB3440"/>
<dbReference type="PATRIC" id="fig|233413.5.peg.3775"/>
<dbReference type="Proteomes" id="UP000001419">
    <property type="component" value="Chromosome"/>
</dbReference>
<dbReference type="GO" id="GO:0005737">
    <property type="term" value="C:cytoplasm"/>
    <property type="evidence" value="ECO:0007669"/>
    <property type="project" value="TreeGrafter"/>
</dbReference>
<dbReference type="GO" id="GO:0016706">
    <property type="term" value="F:2-oxoglutarate-dependent dioxygenase activity"/>
    <property type="evidence" value="ECO:0007669"/>
    <property type="project" value="TreeGrafter"/>
</dbReference>
<dbReference type="GO" id="GO:0046872">
    <property type="term" value="F:metal ion binding"/>
    <property type="evidence" value="ECO:0007669"/>
    <property type="project" value="UniProtKB-KW"/>
</dbReference>
<dbReference type="FunFam" id="3.60.130.10:FF:000002">
    <property type="entry name" value="Alpha-ketoglutarate-dependent taurine dioxygenase"/>
    <property type="match status" value="1"/>
</dbReference>
<dbReference type="Gene3D" id="3.60.130.10">
    <property type="entry name" value="Clavaminate synthase-like"/>
    <property type="match status" value="1"/>
</dbReference>
<dbReference type="InterPro" id="IPR051323">
    <property type="entry name" value="AtsK-like"/>
</dbReference>
<dbReference type="InterPro" id="IPR042098">
    <property type="entry name" value="TauD-like_sf"/>
</dbReference>
<dbReference type="InterPro" id="IPR003819">
    <property type="entry name" value="TauD/TfdA-like"/>
</dbReference>
<dbReference type="PANTHER" id="PTHR30468:SF5">
    <property type="entry name" value="ALPHA-KETOGLUTARATE-DEPENDENT SULFATE ESTER DIOXYGENASE"/>
    <property type="match status" value="1"/>
</dbReference>
<dbReference type="PANTHER" id="PTHR30468">
    <property type="entry name" value="ALPHA-KETOGLUTARATE-DEPENDENT SULFONATE DIOXYGENASE"/>
    <property type="match status" value="1"/>
</dbReference>
<dbReference type="Pfam" id="PF02668">
    <property type="entry name" value="TauD"/>
    <property type="match status" value="1"/>
</dbReference>
<dbReference type="SUPFAM" id="SSF51197">
    <property type="entry name" value="Clavaminate synthase-like"/>
    <property type="match status" value="1"/>
</dbReference>
<accession>P65076</accession>
<accession>A0A1R3Y490</accession>
<accession>Q50719</accession>
<accession>X2BPH3</accession>
<name>ATSK_MYCBO</name>
<protein>
    <recommendedName>
        <fullName evidence="1">Alpha-ketoglutarate-dependent sulfate ester dioxygenase</fullName>
        <ecNumber evidence="1">1.14.11.77</ecNumber>
    </recommendedName>
    <alternativeName>
        <fullName evidence="1">Type II alkyl sulfatase</fullName>
    </alternativeName>
</protein>
<comment type="function">
    <text evidence="1">Alpha-ketoglutarate-dependent sulfate ester dioxygenase, which oxidizes medium-chain alkyl-sulfate esters. Thus, catalyzes the oxygenolytic cleavage of 2-ethylhexyl sulfate (2-EHS), leading to the formation of succinate and 2-ethylhexanal. Has likely a role in sulfate scavenging in vivo.</text>
</comment>
<comment type="catalytic activity">
    <reaction evidence="1">
        <text>a primary linear alkyl sulfate ester + 2-oxoglutarate + O2 = an aldehyde + sulfate + succinate + CO2 + H(+)</text>
        <dbReference type="Rhea" id="RHEA:65716"/>
        <dbReference type="ChEBI" id="CHEBI:15378"/>
        <dbReference type="ChEBI" id="CHEBI:15379"/>
        <dbReference type="ChEBI" id="CHEBI:16189"/>
        <dbReference type="ChEBI" id="CHEBI:16526"/>
        <dbReference type="ChEBI" id="CHEBI:16810"/>
        <dbReference type="ChEBI" id="CHEBI:17478"/>
        <dbReference type="ChEBI" id="CHEBI:30031"/>
        <dbReference type="ChEBI" id="CHEBI:157685"/>
        <dbReference type="EC" id="1.14.11.77"/>
    </reaction>
</comment>
<comment type="catalytic activity">
    <reaction evidence="1">
        <text>2-ethylhexyl sulfate + 2-oxoglutarate + O2 = 2-ethylhexanal + sulfate + succinate + CO2 + H(+)</text>
        <dbReference type="Rhea" id="RHEA:47620"/>
        <dbReference type="ChEBI" id="CHEBI:15378"/>
        <dbReference type="ChEBI" id="CHEBI:15379"/>
        <dbReference type="ChEBI" id="CHEBI:16189"/>
        <dbReference type="ChEBI" id="CHEBI:16526"/>
        <dbReference type="ChEBI" id="CHEBI:16810"/>
        <dbReference type="ChEBI" id="CHEBI:30031"/>
        <dbReference type="ChEBI" id="CHEBI:87808"/>
        <dbReference type="ChEBI" id="CHEBI:87809"/>
        <dbReference type="EC" id="1.14.11.77"/>
    </reaction>
</comment>
<comment type="cofactor">
    <cofactor evidence="1">
        <name>Fe(2+)</name>
        <dbReference type="ChEBI" id="CHEBI:29033"/>
    </cofactor>
</comment>
<comment type="similarity">
    <text evidence="3">Belongs to the TfdA dioxygenase family.</text>
</comment>
<reference key="1">
    <citation type="journal article" date="2003" name="Proc. Natl. Acad. Sci. U.S.A.">
        <title>The complete genome sequence of Mycobacterium bovis.</title>
        <authorList>
            <person name="Garnier T."/>
            <person name="Eiglmeier K."/>
            <person name="Camus J.-C."/>
            <person name="Medina N."/>
            <person name="Mansoor H."/>
            <person name="Pryor M."/>
            <person name="Duthoy S."/>
            <person name="Grondin S."/>
            <person name="Lacroix C."/>
            <person name="Monsempe C."/>
            <person name="Simon S."/>
            <person name="Harris B."/>
            <person name="Atkin R."/>
            <person name="Doggett J."/>
            <person name="Mayes R."/>
            <person name="Keating L."/>
            <person name="Wheeler P.R."/>
            <person name="Parkhill J."/>
            <person name="Barrell B.G."/>
            <person name="Cole S.T."/>
            <person name="Gordon S.V."/>
            <person name="Hewinson R.G."/>
        </authorList>
    </citation>
    <scope>NUCLEOTIDE SEQUENCE [LARGE SCALE GENOMIC DNA]</scope>
    <source>
        <strain>ATCC BAA-935 / AF2122/97</strain>
    </source>
</reference>
<reference key="2">
    <citation type="journal article" date="2017" name="Genome Announc.">
        <title>Updated reference genome sequence and annotation of Mycobacterium bovis AF2122/97.</title>
        <authorList>
            <person name="Malone K.M."/>
            <person name="Farrell D."/>
            <person name="Stuber T.P."/>
            <person name="Schubert O.T."/>
            <person name="Aebersold R."/>
            <person name="Robbe-Austerman S."/>
            <person name="Gordon S.V."/>
        </authorList>
    </citation>
    <scope>NUCLEOTIDE SEQUENCE [LARGE SCALE GENOMIC DNA]</scope>
    <scope>GENOME REANNOTATION</scope>
    <source>
        <strain>ATCC BAA-935 / AF2122/97</strain>
    </source>
</reference>
<sequence>MTDLITVKKLGSRIGAQIDGVRLGGDLDPAAVNEIRAALLAHKVVFFRGQHQLDDAEQLAFAGLLGTPIGHPAAIALADDAPIITPINSEFGKANRWHTDVTFAANYPAASVLRAVSLPSYGGSTLWANTAAAYAELPEPLKCLTENLWALHTNRYDYVTTKPLTAAQRAFRQVFEKPDFRTEHPVVRVHPETGERTLLAGDFVRSFVGLDSHESRVLFEVLQRRITMPENTIRWNWAPGDVAIWDNRATQHRAIDDYDDQHRLMHRVTLMGDVPVDVYGQASRVISGAPMEIAG</sequence>
<keyword id="KW-0223">Dioxygenase</keyword>
<keyword id="KW-0408">Iron</keyword>
<keyword id="KW-0479">Metal-binding</keyword>
<keyword id="KW-0560">Oxidoreductase</keyword>
<keyword id="KW-1185">Reference proteome</keyword>
<organism>
    <name type="scientific">Mycobacterium bovis (strain ATCC BAA-935 / AF2122/97)</name>
    <dbReference type="NCBI Taxonomy" id="233413"/>
    <lineage>
        <taxon>Bacteria</taxon>
        <taxon>Bacillati</taxon>
        <taxon>Actinomycetota</taxon>
        <taxon>Actinomycetes</taxon>
        <taxon>Mycobacteriales</taxon>
        <taxon>Mycobacteriaceae</taxon>
        <taxon>Mycobacterium</taxon>
        <taxon>Mycobacterium tuberculosis complex</taxon>
    </lineage>
</organism>
<feature type="chain" id="PRO_0000104126" description="Alpha-ketoglutarate-dependent sulfate ester dioxygenase">
    <location>
        <begin position="1"/>
        <end position="295"/>
    </location>
</feature>
<feature type="binding site" evidence="2">
    <location>
        <position position="71"/>
    </location>
    <ligand>
        <name>substrate</name>
    </ligand>
</feature>
<feature type="binding site" evidence="1">
    <location>
        <position position="98"/>
    </location>
    <ligand>
        <name>Fe cation</name>
        <dbReference type="ChEBI" id="CHEBI:24875"/>
    </ligand>
</feature>
<feature type="binding site" evidence="1">
    <location>
        <position position="100"/>
    </location>
    <ligand>
        <name>Fe cation</name>
        <dbReference type="ChEBI" id="CHEBI:24875"/>
    </ligand>
</feature>
<feature type="binding site" evidence="2">
    <location>
        <position position="101"/>
    </location>
    <ligand>
        <name>substrate</name>
    </ligand>
</feature>
<feature type="binding site" evidence="2">
    <location>
        <position position="125"/>
    </location>
    <ligand>
        <name>2-oxoglutarate</name>
        <dbReference type="ChEBI" id="CHEBI:16810"/>
    </ligand>
</feature>
<feature type="binding site" evidence="1">
    <location>
        <position position="252"/>
    </location>
    <ligand>
        <name>Fe cation</name>
        <dbReference type="ChEBI" id="CHEBI:24875"/>
    </ligand>
</feature>
<feature type="binding site" evidence="2">
    <location>
        <position position="263"/>
    </location>
    <ligand>
        <name>2-oxoglutarate</name>
        <dbReference type="ChEBI" id="CHEBI:16810"/>
    </ligand>
</feature>
<feature type="binding site" evidence="2">
    <location>
        <position position="267"/>
    </location>
    <ligand>
        <name>2-oxoglutarate</name>
        <dbReference type="ChEBI" id="CHEBI:16810"/>
    </ligand>
</feature>
<gene>
    <name type="ordered locus">BQ2027_MB3440</name>
</gene>
<proteinExistence type="inferred from homology"/>